<proteinExistence type="inferred from homology"/>
<evidence type="ECO:0000255" key="1">
    <source>
        <dbReference type="HAMAP-Rule" id="MF_00147"/>
    </source>
</evidence>
<dbReference type="EC" id="5.3.1.1" evidence="1"/>
<dbReference type="EMBL" id="CP000605">
    <property type="protein sequence ID" value="ACD97879.1"/>
    <property type="molecule type" value="Genomic_DNA"/>
</dbReference>
<dbReference type="RefSeq" id="WP_007052784.1">
    <property type="nucleotide sequence ID" value="NZ_AABM02000001.1"/>
</dbReference>
<dbReference type="SMR" id="B3DRW0"/>
<dbReference type="KEGG" id="blj:BLD_0433"/>
<dbReference type="HOGENOM" id="CLU_024251_2_3_11"/>
<dbReference type="UniPathway" id="UPA00109">
    <property type="reaction ID" value="UER00189"/>
</dbReference>
<dbReference type="UniPathway" id="UPA00138"/>
<dbReference type="Proteomes" id="UP000002419">
    <property type="component" value="Chromosome"/>
</dbReference>
<dbReference type="GO" id="GO:0005829">
    <property type="term" value="C:cytosol"/>
    <property type="evidence" value="ECO:0007669"/>
    <property type="project" value="TreeGrafter"/>
</dbReference>
<dbReference type="GO" id="GO:0004807">
    <property type="term" value="F:triose-phosphate isomerase activity"/>
    <property type="evidence" value="ECO:0007669"/>
    <property type="project" value="UniProtKB-UniRule"/>
</dbReference>
<dbReference type="GO" id="GO:0006094">
    <property type="term" value="P:gluconeogenesis"/>
    <property type="evidence" value="ECO:0007669"/>
    <property type="project" value="UniProtKB-UniRule"/>
</dbReference>
<dbReference type="GO" id="GO:0046166">
    <property type="term" value="P:glyceraldehyde-3-phosphate biosynthetic process"/>
    <property type="evidence" value="ECO:0007669"/>
    <property type="project" value="TreeGrafter"/>
</dbReference>
<dbReference type="GO" id="GO:0019563">
    <property type="term" value="P:glycerol catabolic process"/>
    <property type="evidence" value="ECO:0007669"/>
    <property type="project" value="TreeGrafter"/>
</dbReference>
<dbReference type="GO" id="GO:0006096">
    <property type="term" value="P:glycolytic process"/>
    <property type="evidence" value="ECO:0007669"/>
    <property type="project" value="UniProtKB-UniRule"/>
</dbReference>
<dbReference type="CDD" id="cd00311">
    <property type="entry name" value="TIM"/>
    <property type="match status" value="1"/>
</dbReference>
<dbReference type="FunFam" id="3.20.20.70:FF:000016">
    <property type="entry name" value="Triosephosphate isomerase"/>
    <property type="match status" value="1"/>
</dbReference>
<dbReference type="Gene3D" id="3.20.20.70">
    <property type="entry name" value="Aldolase class I"/>
    <property type="match status" value="1"/>
</dbReference>
<dbReference type="HAMAP" id="MF_00147_B">
    <property type="entry name" value="TIM_B"/>
    <property type="match status" value="1"/>
</dbReference>
<dbReference type="InterPro" id="IPR013785">
    <property type="entry name" value="Aldolase_TIM"/>
</dbReference>
<dbReference type="InterPro" id="IPR035990">
    <property type="entry name" value="TIM_sf"/>
</dbReference>
<dbReference type="InterPro" id="IPR022896">
    <property type="entry name" value="TrioseP_Isoase_bac/euk"/>
</dbReference>
<dbReference type="InterPro" id="IPR000652">
    <property type="entry name" value="Triosephosphate_isomerase"/>
</dbReference>
<dbReference type="InterPro" id="IPR020861">
    <property type="entry name" value="Triosephosphate_isomerase_AS"/>
</dbReference>
<dbReference type="NCBIfam" id="TIGR00419">
    <property type="entry name" value="tim"/>
    <property type="match status" value="1"/>
</dbReference>
<dbReference type="PANTHER" id="PTHR21139">
    <property type="entry name" value="TRIOSEPHOSPHATE ISOMERASE"/>
    <property type="match status" value="1"/>
</dbReference>
<dbReference type="PANTHER" id="PTHR21139:SF42">
    <property type="entry name" value="TRIOSEPHOSPHATE ISOMERASE"/>
    <property type="match status" value="1"/>
</dbReference>
<dbReference type="Pfam" id="PF00121">
    <property type="entry name" value="TIM"/>
    <property type="match status" value="1"/>
</dbReference>
<dbReference type="SUPFAM" id="SSF51351">
    <property type="entry name" value="Triosephosphate isomerase (TIM)"/>
    <property type="match status" value="1"/>
</dbReference>
<dbReference type="PROSITE" id="PS00171">
    <property type="entry name" value="TIM_1"/>
    <property type="match status" value="1"/>
</dbReference>
<dbReference type="PROSITE" id="PS51440">
    <property type="entry name" value="TIM_2"/>
    <property type="match status" value="1"/>
</dbReference>
<organism>
    <name type="scientific">Bifidobacterium longum (strain DJO10A)</name>
    <dbReference type="NCBI Taxonomy" id="205913"/>
    <lineage>
        <taxon>Bacteria</taxon>
        <taxon>Bacillati</taxon>
        <taxon>Actinomycetota</taxon>
        <taxon>Actinomycetes</taxon>
        <taxon>Bifidobacteriales</taxon>
        <taxon>Bifidobacteriaceae</taxon>
        <taxon>Bifidobacterium</taxon>
    </lineage>
</organism>
<reference key="1">
    <citation type="journal article" date="2008" name="BMC Genomics">
        <title>Comparative genomic analysis of the gut bacterium Bifidobacterium longum reveals loci susceptible to deletion during pure culture growth.</title>
        <authorList>
            <person name="Lee J.H."/>
            <person name="Karamychev V.N."/>
            <person name="Kozyavkin S.A."/>
            <person name="Mills D."/>
            <person name="Pavlov A.R."/>
            <person name="Pavlova N.V."/>
            <person name="Polouchine N.N."/>
            <person name="Richardson P.M."/>
            <person name="Shakhova V.V."/>
            <person name="Slesarev A.I."/>
            <person name="Weimer B."/>
            <person name="O'Sullivan D.J."/>
        </authorList>
    </citation>
    <scope>NUCLEOTIDE SEQUENCE [LARGE SCALE GENOMIC DNA]</scope>
    <source>
        <strain>DJO10A</strain>
    </source>
</reference>
<feature type="chain" id="PRO_1000096477" description="Triosephosphate isomerase">
    <location>
        <begin position="1"/>
        <end position="267"/>
    </location>
</feature>
<feature type="active site" description="Electrophile" evidence="1">
    <location>
        <position position="104"/>
    </location>
</feature>
<feature type="active site" description="Proton acceptor" evidence="1">
    <location>
        <position position="176"/>
    </location>
</feature>
<feature type="binding site" evidence="1">
    <location>
        <begin position="12"/>
        <end position="14"/>
    </location>
    <ligand>
        <name>substrate</name>
    </ligand>
</feature>
<feature type="binding site" evidence="1">
    <location>
        <position position="182"/>
    </location>
    <ligand>
        <name>substrate</name>
    </ligand>
</feature>
<feature type="binding site" evidence="1">
    <location>
        <position position="222"/>
    </location>
    <ligand>
        <name>substrate</name>
    </ligand>
</feature>
<feature type="binding site" evidence="1">
    <location>
        <begin position="243"/>
        <end position="244"/>
    </location>
    <ligand>
        <name>substrate</name>
    </ligand>
</feature>
<name>TPIS_BIFLD</name>
<accession>B3DRW0</accession>
<keyword id="KW-0963">Cytoplasm</keyword>
<keyword id="KW-0312">Gluconeogenesis</keyword>
<keyword id="KW-0324">Glycolysis</keyword>
<keyword id="KW-0413">Isomerase</keyword>
<gene>
    <name evidence="1" type="primary">tpiA</name>
    <name type="ordered locus">BLD_0433</name>
</gene>
<comment type="function">
    <text evidence="1">Involved in the gluconeogenesis. Catalyzes stereospecifically the conversion of dihydroxyacetone phosphate (DHAP) to D-glyceraldehyde-3-phosphate (G3P).</text>
</comment>
<comment type="catalytic activity">
    <reaction evidence="1">
        <text>D-glyceraldehyde 3-phosphate = dihydroxyacetone phosphate</text>
        <dbReference type="Rhea" id="RHEA:18585"/>
        <dbReference type="ChEBI" id="CHEBI:57642"/>
        <dbReference type="ChEBI" id="CHEBI:59776"/>
        <dbReference type="EC" id="5.3.1.1"/>
    </reaction>
</comment>
<comment type="pathway">
    <text evidence="1">Carbohydrate biosynthesis; gluconeogenesis.</text>
</comment>
<comment type="pathway">
    <text evidence="1">Carbohydrate degradation; glycolysis; D-glyceraldehyde 3-phosphate from glycerone phosphate: step 1/1.</text>
</comment>
<comment type="subunit">
    <text evidence="1">Homodimer.</text>
</comment>
<comment type="subcellular location">
    <subcellularLocation>
        <location evidence="1">Cytoplasm</location>
    </subcellularLocation>
</comment>
<comment type="similarity">
    <text evidence="1">Belongs to the triosephosphate isomerase family.</text>
</comment>
<protein>
    <recommendedName>
        <fullName evidence="1">Triosephosphate isomerase</fullName>
        <shortName evidence="1">TIM</shortName>
        <shortName evidence="1">TPI</shortName>
        <ecNumber evidence="1">5.3.1.1</ecNumber>
    </recommendedName>
    <alternativeName>
        <fullName evidence="1">Triose-phosphate isomerase</fullName>
    </alternativeName>
</protein>
<sequence>MASKRIPLVAGNWKMNFDHLEATYFVQKLVWLLRDAHFDFKRCEVALFPSFTSLRSVQVLVEADKLHVAYGAQSVSVTTQGAFTGDVSADMIAHLGCSYVIVGHSERRKYHPEDDANIVDQVRAVLAAGMQPILCVGESFEERRQGIELDFAVGQVRDVTRDLNEEQAAKLIVAYEPVWAIGTGMVATPQSAQDAANAIRNDLKTTFGTKVSDSVRILYGGSVTSKNAAELISQPDVDGFLIGGAALDVEELAKIARLALKSTKSRN</sequence>